<organism>
    <name type="scientific">Synechocystis sp. (strain ATCC 27184 / PCC 6803 / Kazusa)</name>
    <dbReference type="NCBI Taxonomy" id="1111708"/>
    <lineage>
        <taxon>Bacteria</taxon>
        <taxon>Bacillati</taxon>
        <taxon>Cyanobacteriota</taxon>
        <taxon>Cyanophyceae</taxon>
        <taxon>Synechococcales</taxon>
        <taxon>Merismopediaceae</taxon>
        <taxon>Synechocystis</taxon>
    </lineage>
</organism>
<gene>
    <name evidence="1" type="primary">purL</name>
    <name type="ordered locus">sll1056</name>
</gene>
<proteinExistence type="inferred from homology"/>
<keyword id="KW-0067">ATP-binding</keyword>
<keyword id="KW-0963">Cytoplasm</keyword>
<keyword id="KW-0436">Ligase</keyword>
<keyword id="KW-0460">Magnesium</keyword>
<keyword id="KW-0479">Metal-binding</keyword>
<keyword id="KW-0547">Nucleotide-binding</keyword>
<keyword id="KW-0658">Purine biosynthesis</keyword>
<keyword id="KW-1185">Reference proteome</keyword>
<comment type="function">
    <text evidence="1">Part of the phosphoribosylformylglycinamidine synthase complex involved in the purines biosynthetic pathway. Catalyzes the ATP-dependent conversion of formylglycinamide ribonucleotide (FGAR) and glutamine to yield formylglycinamidine ribonucleotide (FGAM) and glutamate. The FGAM synthase complex is composed of three subunits. PurQ produces an ammonia molecule by converting glutamine to glutamate. PurL transfers the ammonia molecule to FGAR to form FGAM in an ATP-dependent manner. PurS interacts with PurQ and PurL and is thought to assist in the transfer of the ammonia molecule from PurQ to PurL.</text>
</comment>
<comment type="catalytic activity">
    <reaction evidence="1">
        <text>N(2)-formyl-N(1)-(5-phospho-beta-D-ribosyl)glycinamide + L-glutamine + ATP + H2O = 2-formamido-N(1)-(5-O-phospho-beta-D-ribosyl)acetamidine + L-glutamate + ADP + phosphate + H(+)</text>
        <dbReference type="Rhea" id="RHEA:17129"/>
        <dbReference type="ChEBI" id="CHEBI:15377"/>
        <dbReference type="ChEBI" id="CHEBI:15378"/>
        <dbReference type="ChEBI" id="CHEBI:29985"/>
        <dbReference type="ChEBI" id="CHEBI:30616"/>
        <dbReference type="ChEBI" id="CHEBI:43474"/>
        <dbReference type="ChEBI" id="CHEBI:58359"/>
        <dbReference type="ChEBI" id="CHEBI:147286"/>
        <dbReference type="ChEBI" id="CHEBI:147287"/>
        <dbReference type="ChEBI" id="CHEBI:456216"/>
        <dbReference type="EC" id="6.3.5.3"/>
    </reaction>
</comment>
<comment type="pathway">
    <text evidence="1">Purine metabolism; IMP biosynthesis via de novo pathway; 5-amino-1-(5-phospho-D-ribosyl)imidazole from N(2)-formyl-N(1)-(5-phospho-D-ribosyl)glycinamide: step 1/2.</text>
</comment>
<comment type="subunit">
    <text evidence="1">Monomer. Part of the FGAM synthase complex composed of 1 PurL, 1 PurQ and 2 PurS subunits.</text>
</comment>
<comment type="subcellular location">
    <subcellularLocation>
        <location evidence="1">Cytoplasm</location>
    </subcellularLocation>
</comment>
<comment type="similarity">
    <text evidence="1">Belongs to the FGAMS family.</text>
</comment>
<comment type="sequence caution" evidence="2">
    <conflict type="erroneous initiation">
        <sequence resource="EMBL-CDS" id="BAA16646"/>
    </conflict>
    <text>Extended N-terminus.</text>
</comment>
<dbReference type="EC" id="6.3.5.3" evidence="1"/>
<dbReference type="EMBL" id="BA000022">
    <property type="protein sequence ID" value="BAA16646.1"/>
    <property type="status" value="ALT_INIT"/>
    <property type="molecule type" value="Genomic_DNA"/>
</dbReference>
<dbReference type="PIR" id="S74494">
    <property type="entry name" value="S74494"/>
</dbReference>
<dbReference type="SMR" id="P72644"/>
<dbReference type="FunCoup" id="P72644">
    <property type="interactions" value="422"/>
</dbReference>
<dbReference type="STRING" id="1148.gene:10497501"/>
<dbReference type="PaxDb" id="1148-1651718"/>
<dbReference type="EnsemblBacteria" id="BAA16646">
    <property type="protein sequence ID" value="BAA16646"/>
    <property type="gene ID" value="BAA16646"/>
</dbReference>
<dbReference type="KEGG" id="syn:sll1056"/>
<dbReference type="eggNOG" id="COG0046">
    <property type="taxonomic scope" value="Bacteria"/>
</dbReference>
<dbReference type="InParanoid" id="P72644"/>
<dbReference type="PhylomeDB" id="P72644"/>
<dbReference type="UniPathway" id="UPA00074">
    <property type="reaction ID" value="UER00128"/>
</dbReference>
<dbReference type="Proteomes" id="UP000001425">
    <property type="component" value="Chromosome"/>
</dbReference>
<dbReference type="GO" id="GO:0005737">
    <property type="term" value="C:cytoplasm"/>
    <property type="evidence" value="ECO:0007669"/>
    <property type="project" value="UniProtKB-SubCell"/>
</dbReference>
<dbReference type="GO" id="GO:0005524">
    <property type="term" value="F:ATP binding"/>
    <property type="evidence" value="ECO:0007669"/>
    <property type="project" value="UniProtKB-UniRule"/>
</dbReference>
<dbReference type="GO" id="GO:0000287">
    <property type="term" value="F:magnesium ion binding"/>
    <property type="evidence" value="ECO:0007669"/>
    <property type="project" value="UniProtKB-UniRule"/>
</dbReference>
<dbReference type="GO" id="GO:0004642">
    <property type="term" value="F:phosphoribosylformylglycinamidine synthase activity"/>
    <property type="evidence" value="ECO:0007669"/>
    <property type="project" value="UniProtKB-UniRule"/>
</dbReference>
<dbReference type="GO" id="GO:0009030">
    <property type="term" value="F:thiamine-phosphate kinase activity"/>
    <property type="evidence" value="ECO:0000318"/>
    <property type="project" value="GO_Central"/>
</dbReference>
<dbReference type="GO" id="GO:0006189">
    <property type="term" value="P:'de novo' IMP biosynthetic process"/>
    <property type="evidence" value="ECO:0007669"/>
    <property type="project" value="UniProtKB-UniRule"/>
</dbReference>
<dbReference type="GO" id="GO:0009228">
    <property type="term" value="P:thiamine biosynthetic process"/>
    <property type="evidence" value="ECO:0000318"/>
    <property type="project" value="GO_Central"/>
</dbReference>
<dbReference type="GO" id="GO:0009229">
    <property type="term" value="P:thiamine diphosphate biosynthetic process"/>
    <property type="evidence" value="ECO:0000318"/>
    <property type="project" value="GO_Central"/>
</dbReference>
<dbReference type="CDD" id="cd02203">
    <property type="entry name" value="PurL_repeat1"/>
    <property type="match status" value="1"/>
</dbReference>
<dbReference type="CDD" id="cd02204">
    <property type="entry name" value="PurL_repeat2"/>
    <property type="match status" value="1"/>
</dbReference>
<dbReference type="FunFam" id="3.30.1330.10:FF:000004">
    <property type="entry name" value="Phosphoribosylformylglycinamidine synthase subunit PurL"/>
    <property type="match status" value="1"/>
</dbReference>
<dbReference type="Gene3D" id="3.90.650.10">
    <property type="entry name" value="PurM-like C-terminal domain"/>
    <property type="match status" value="2"/>
</dbReference>
<dbReference type="Gene3D" id="3.30.1330.10">
    <property type="entry name" value="PurM-like, N-terminal domain"/>
    <property type="match status" value="2"/>
</dbReference>
<dbReference type="HAMAP" id="MF_00420">
    <property type="entry name" value="PurL_2"/>
    <property type="match status" value="1"/>
</dbReference>
<dbReference type="InterPro" id="IPR010074">
    <property type="entry name" value="PRibForGlyAmidine_synth_PurL"/>
</dbReference>
<dbReference type="InterPro" id="IPR041609">
    <property type="entry name" value="PurL_linker"/>
</dbReference>
<dbReference type="InterPro" id="IPR010918">
    <property type="entry name" value="PurM-like_C_dom"/>
</dbReference>
<dbReference type="InterPro" id="IPR036676">
    <property type="entry name" value="PurM-like_C_sf"/>
</dbReference>
<dbReference type="InterPro" id="IPR016188">
    <property type="entry name" value="PurM-like_N"/>
</dbReference>
<dbReference type="InterPro" id="IPR036921">
    <property type="entry name" value="PurM-like_N_sf"/>
</dbReference>
<dbReference type="NCBIfam" id="TIGR01736">
    <property type="entry name" value="FGAM_synth_II"/>
    <property type="match status" value="1"/>
</dbReference>
<dbReference type="NCBIfam" id="NF002290">
    <property type="entry name" value="PRK01213.1"/>
    <property type="match status" value="1"/>
</dbReference>
<dbReference type="PANTHER" id="PTHR43555">
    <property type="entry name" value="PHOSPHORIBOSYLFORMYLGLYCINAMIDINE SYNTHASE SUBUNIT PURL"/>
    <property type="match status" value="1"/>
</dbReference>
<dbReference type="PANTHER" id="PTHR43555:SF1">
    <property type="entry name" value="PHOSPHORIBOSYLFORMYLGLYCINAMIDINE SYNTHASE SUBUNIT PURL"/>
    <property type="match status" value="1"/>
</dbReference>
<dbReference type="Pfam" id="PF00586">
    <property type="entry name" value="AIRS"/>
    <property type="match status" value="2"/>
</dbReference>
<dbReference type="Pfam" id="PF02769">
    <property type="entry name" value="AIRS_C"/>
    <property type="match status" value="2"/>
</dbReference>
<dbReference type="Pfam" id="PF18072">
    <property type="entry name" value="FGAR-AT_linker"/>
    <property type="match status" value="1"/>
</dbReference>
<dbReference type="PIRSF" id="PIRSF001587">
    <property type="entry name" value="FGAM_synthase_II"/>
    <property type="match status" value="1"/>
</dbReference>
<dbReference type="SUPFAM" id="SSF56042">
    <property type="entry name" value="PurM C-terminal domain-like"/>
    <property type="match status" value="2"/>
</dbReference>
<dbReference type="SUPFAM" id="SSF55326">
    <property type="entry name" value="PurM N-terminal domain-like"/>
    <property type="match status" value="2"/>
</dbReference>
<name>PURL_SYNY3</name>
<accession>P72644</accession>
<feature type="chain" id="PRO_0000100500" description="Phosphoribosylformylglycinamidine synthase subunit PurL">
    <location>
        <begin position="1"/>
        <end position="768"/>
    </location>
</feature>
<feature type="active site" evidence="1">
    <location>
        <position position="46"/>
    </location>
</feature>
<feature type="active site" description="Proton acceptor" evidence="1">
    <location>
        <position position="92"/>
    </location>
</feature>
<feature type="binding site" evidence="1">
    <location>
        <position position="49"/>
    </location>
    <ligand>
        <name>ATP</name>
        <dbReference type="ChEBI" id="CHEBI:30616"/>
    </ligand>
</feature>
<feature type="binding site" evidence="1">
    <location>
        <position position="88"/>
    </location>
    <ligand>
        <name>ATP</name>
        <dbReference type="ChEBI" id="CHEBI:30616"/>
    </ligand>
</feature>
<feature type="binding site" evidence="1">
    <location>
        <position position="90"/>
    </location>
    <ligand>
        <name>Mg(2+)</name>
        <dbReference type="ChEBI" id="CHEBI:18420"/>
        <label>1</label>
    </ligand>
</feature>
<feature type="binding site" evidence="1">
    <location>
        <begin position="91"/>
        <end position="94"/>
    </location>
    <ligand>
        <name>substrate</name>
    </ligand>
</feature>
<feature type="binding site" evidence="1">
    <location>
        <position position="113"/>
    </location>
    <ligand>
        <name>substrate</name>
    </ligand>
</feature>
<feature type="binding site" evidence="1">
    <location>
        <position position="114"/>
    </location>
    <ligand>
        <name>Mg(2+)</name>
        <dbReference type="ChEBI" id="CHEBI:18420"/>
        <label>2</label>
    </ligand>
</feature>
<feature type="binding site" evidence="1">
    <location>
        <position position="237"/>
    </location>
    <ligand>
        <name>substrate</name>
    </ligand>
</feature>
<feature type="binding site" evidence="1">
    <location>
        <position position="265"/>
    </location>
    <ligand>
        <name>Mg(2+)</name>
        <dbReference type="ChEBI" id="CHEBI:18420"/>
        <label>2</label>
    </ligand>
</feature>
<feature type="binding site" evidence="1">
    <location>
        <begin position="309"/>
        <end position="311"/>
    </location>
    <ligand>
        <name>substrate</name>
    </ligand>
</feature>
<feature type="binding site" evidence="1">
    <location>
        <position position="514"/>
    </location>
    <ligand>
        <name>ATP</name>
        <dbReference type="ChEBI" id="CHEBI:30616"/>
    </ligand>
</feature>
<feature type="binding site" evidence="1">
    <location>
        <position position="551"/>
    </location>
    <ligand>
        <name>ATP</name>
        <dbReference type="ChEBI" id="CHEBI:30616"/>
    </ligand>
</feature>
<feature type="binding site" evidence="1">
    <location>
        <position position="552"/>
    </location>
    <ligand>
        <name>Mg(2+)</name>
        <dbReference type="ChEBI" id="CHEBI:18420"/>
        <label>1</label>
    </ligand>
</feature>
<feature type="binding site" evidence="1">
    <location>
        <position position="554"/>
    </location>
    <ligand>
        <name>substrate</name>
    </ligand>
</feature>
<reference key="1">
    <citation type="journal article" date="1996" name="DNA Res.">
        <title>Sequence analysis of the genome of the unicellular cyanobacterium Synechocystis sp. strain PCC6803. II. Sequence determination of the entire genome and assignment of potential protein-coding regions.</title>
        <authorList>
            <person name="Kaneko T."/>
            <person name="Sato S."/>
            <person name="Kotani H."/>
            <person name="Tanaka A."/>
            <person name="Asamizu E."/>
            <person name="Nakamura Y."/>
            <person name="Miyajima N."/>
            <person name="Hirosawa M."/>
            <person name="Sugiura M."/>
            <person name="Sasamoto S."/>
            <person name="Kimura T."/>
            <person name="Hosouchi T."/>
            <person name="Matsuno A."/>
            <person name="Muraki A."/>
            <person name="Nakazaki N."/>
            <person name="Naruo K."/>
            <person name="Okumura S."/>
            <person name="Shimpo S."/>
            <person name="Takeuchi C."/>
            <person name="Wada T."/>
            <person name="Watanabe A."/>
            <person name="Yamada M."/>
            <person name="Yasuda M."/>
            <person name="Tabata S."/>
        </authorList>
    </citation>
    <scope>NUCLEOTIDE SEQUENCE [LARGE SCALE GENOMIC DNA]</scope>
    <source>
        <strain>ATCC 27184 / PCC 6803 / Kazusa</strain>
    </source>
</reference>
<sequence length="768" mass="81832">MTAPFTPAEIAAEGIKPEEYEDIVQRLGRHPNKAELGMFGVMWSEHCCYKNSRPLLSNFPTEGERILVGPGENAGVVDLGDGLRLAFKIESHNHPSAVEPFQGAATGVGGILRDIFTMGARPIAILNSLRFGNLDDARNRRIFTGVVDGISHYGNCVGVPTVGGEIYFDPAYSGNPLVNAMALGLMETEEIVKAGASGIGNPVLYVGSTTGRDGMGGASFASAELTDQSMDDRPAVQVGDPFLEKSLIEACLEAFKSGAVVAAQDMGAAGITCSTAEMAAKGGVGIELDLDKIPVRETGMVPYEYLLSESQERMLFVAQPGREQELIDIFHRWGLQAVVAGQVIADPIVRIFFQGGIAAEIPATALADNTPIYHRQLLDQAPDYAQQAWQWQESDLSPAAIAGIEIAGQKQSWNEVLLTLLDSPTIASKHWVYRQYDHQVQNNTVIVPGGADAAVVRVRPLDAKPEECVIGVAATTDCNARYVYLNPLEGAKAAVAEAARNLSCVGAEPLAVTDNLNFGSPENPVGYWQLALACEGIAEGCRQLNTPVTGGNVSLYNETLDSNGRPQPIYPTPVIGMVGRVENINKVVGQGWRNSGNGIYLLGSNDGNTLGGSEYLAVVHHTVAGQPPQVDFDLEKAVQKACRHGIAQGWVNAAHDCAEGGLSVALAEMAIASQLGAEINLPDSDQRLDNLLFGESASRIVVAVAPEHQPAWENYLAGQSLPWQKLGVVGTAQGNLTFIDAQNNALIDLPVSALTEPWQTAIARRLKS</sequence>
<evidence type="ECO:0000255" key="1">
    <source>
        <dbReference type="HAMAP-Rule" id="MF_00420"/>
    </source>
</evidence>
<evidence type="ECO:0000305" key="2"/>
<protein>
    <recommendedName>
        <fullName evidence="1">Phosphoribosylformylglycinamidine synthase subunit PurL</fullName>
        <shortName evidence="1">FGAM synthase</shortName>
        <ecNumber evidence="1">6.3.5.3</ecNumber>
    </recommendedName>
    <alternativeName>
        <fullName evidence="1">Formylglycinamide ribonucleotide amidotransferase subunit II</fullName>
        <shortName evidence="1">FGAR amidotransferase II</shortName>
        <shortName evidence="1">FGAR-AT II</shortName>
    </alternativeName>
    <alternativeName>
        <fullName evidence="1">Glutamine amidotransferase PurL</fullName>
    </alternativeName>
    <alternativeName>
        <fullName evidence="1">Phosphoribosylformylglycinamidine synthase subunit II</fullName>
    </alternativeName>
</protein>